<feature type="transit peptide" description="Mitochondrion" evidence="3">
    <location>
        <begin position="1"/>
        <end position="48"/>
    </location>
</feature>
<feature type="chain" id="PRO_0000416308" description="NAD(P)H-hydrate epimerase">
    <location>
        <begin position="49"/>
        <end position="288"/>
    </location>
</feature>
<feature type="domain" description="YjeF N-terminal" evidence="3">
    <location>
        <begin position="65"/>
        <end position="275"/>
    </location>
</feature>
<feature type="binding site" evidence="3">
    <location>
        <begin position="119"/>
        <end position="123"/>
    </location>
    <ligand>
        <name>(6S)-NADPHX</name>
        <dbReference type="ChEBI" id="CHEBI:64076"/>
    </ligand>
</feature>
<feature type="binding site" evidence="3">
    <location>
        <position position="120"/>
    </location>
    <ligand>
        <name>K(+)</name>
        <dbReference type="ChEBI" id="CHEBI:29103"/>
    </ligand>
</feature>
<feature type="binding site" evidence="3">
    <location>
        <position position="185"/>
    </location>
    <ligand>
        <name>K(+)</name>
        <dbReference type="ChEBI" id="CHEBI:29103"/>
    </ligand>
</feature>
<feature type="binding site" evidence="3">
    <location>
        <begin position="189"/>
        <end position="195"/>
    </location>
    <ligand>
        <name>(6S)-NADPHX</name>
        <dbReference type="ChEBI" id="CHEBI:64076"/>
    </ligand>
</feature>
<feature type="binding site" evidence="3">
    <location>
        <position position="218"/>
    </location>
    <ligand>
        <name>(6S)-NADPHX</name>
        <dbReference type="ChEBI" id="CHEBI:64076"/>
    </ligand>
</feature>
<feature type="binding site" evidence="3">
    <location>
        <position position="221"/>
    </location>
    <ligand>
        <name>K(+)</name>
        <dbReference type="ChEBI" id="CHEBI:29103"/>
    </ligand>
</feature>
<feature type="modified residue" description="N6-succinyllysine" evidence="1">
    <location>
        <position position="144"/>
    </location>
</feature>
<sequence length="288" mass="31175">MSALRALLGLGLLAAGSRLRRVPGRAGACPAGSAWWEARRPHSGGGGEPAGMASPAVKYLSQEEAQAVDEELFNEYQFSVDQLMELAGLSCATAIAKAYPPTSMSRSPPAVLVICGPGNNGGDGLVCARHLKLFGYQPTIYYPKRPNKPLFTALVTQCQKMDIPFLGEMPPEPMLIDELYELVVDAIFGFSFKGDVREPFRTILSVLDGLTVPIASIDIPSGWDVEKGNSGGIQPDLLISLTAPKKSATQFTGRYHYLGGRFVPPALEKKYQLNLPPYPDTECVYRLQ</sequence>
<evidence type="ECO:0000250" key="1">
    <source>
        <dbReference type="UniProtKB" id="Q8K4Z3"/>
    </source>
</evidence>
<evidence type="ECO:0000250" key="2">
    <source>
        <dbReference type="UniProtKB" id="Q8NCW5"/>
    </source>
</evidence>
<evidence type="ECO:0000255" key="3">
    <source>
        <dbReference type="HAMAP-Rule" id="MF_03159"/>
    </source>
</evidence>
<protein>
    <recommendedName>
        <fullName evidence="3">NAD(P)H-hydrate epimerase</fullName>
        <ecNumber evidence="2">5.1.99.6</ecNumber>
    </recommendedName>
    <alternativeName>
        <fullName evidence="3">Apolipoprotein A-I-binding protein</fullName>
        <shortName evidence="3">AI-BP</shortName>
    </alternativeName>
    <alternativeName>
        <fullName evidence="2">NAD(P)HX epimerase</fullName>
    </alternativeName>
</protein>
<comment type="function">
    <text evidence="2 3">Catalyzes the epimerization of the S- and R-forms of NAD(P)HX, a damaged form of NAD(P)H that is a result of enzymatic or heat-dependent hydration. This is a prerequisite for the S-specific NAD(P)H-hydrate dehydratase to allow the repair of both epimers of NAD(P)HX. Accelerates cholesterol efflux from endothelial cells to high-density lipoprotein (HDL) and thereby regulates angiogenesis (By similarity).</text>
</comment>
<comment type="catalytic activity">
    <reaction evidence="2">
        <text>(6R)-NADHX = (6S)-NADHX</text>
        <dbReference type="Rhea" id="RHEA:32215"/>
        <dbReference type="ChEBI" id="CHEBI:64074"/>
        <dbReference type="ChEBI" id="CHEBI:64075"/>
        <dbReference type="EC" id="5.1.99.6"/>
    </reaction>
</comment>
<comment type="catalytic activity">
    <reaction evidence="2">
        <text>(6R)-NADPHX = (6S)-NADPHX</text>
        <dbReference type="Rhea" id="RHEA:32227"/>
        <dbReference type="ChEBI" id="CHEBI:64076"/>
        <dbReference type="ChEBI" id="CHEBI:64077"/>
        <dbReference type="EC" id="5.1.99.6"/>
    </reaction>
</comment>
<comment type="cofactor">
    <cofactor evidence="3">
        <name>K(+)</name>
        <dbReference type="ChEBI" id="CHEBI:29103"/>
    </cofactor>
    <text evidence="3">Binds 1 potassium ion per subunit.</text>
</comment>
<comment type="subunit">
    <text evidence="1 2">Homodimer (By similarity). Interacts with APOA1 and APOA2 (By similarity).</text>
</comment>
<comment type="subcellular location">
    <subcellularLocation>
        <location evidence="3">Mitochondrion</location>
    </subcellularLocation>
    <subcellularLocation>
        <location evidence="3">Secreted</location>
    </subcellularLocation>
    <text evidence="3">In sperm, secretion gradually increases during capacitation.</text>
</comment>
<comment type="PTM">
    <text evidence="3">Undergoes physiological phosphorylation during sperm capacitation, downstream to PKA activation.</text>
</comment>
<comment type="similarity">
    <text evidence="3">Belongs to the NnrE/AIBP family.</text>
</comment>
<accession>E2QRY6</accession>
<proteinExistence type="inferred from homology"/>
<dbReference type="EC" id="5.1.99.6" evidence="2"/>
<dbReference type="SMR" id="E2QRY6"/>
<dbReference type="FunCoup" id="E2QRY6">
    <property type="interactions" value="1409"/>
</dbReference>
<dbReference type="STRING" id="9615.ENSCAFP00000024694"/>
<dbReference type="PaxDb" id="9612-ENSCAFP00000024694"/>
<dbReference type="eggNOG" id="KOG2585">
    <property type="taxonomic scope" value="Eukaryota"/>
</dbReference>
<dbReference type="InParanoid" id="E2QRY6"/>
<dbReference type="OrthoDB" id="10064708at2759"/>
<dbReference type="Proteomes" id="UP000002254">
    <property type="component" value="Unplaced"/>
</dbReference>
<dbReference type="Proteomes" id="UP000694429">
    <property type="component" value="Unplaced"/>
</dbReference>
<dbReference type="Proteomes" id="UP000694542">
    <property type="component" value="Unplaced"/>
</dbReference>
<dbReference type="Proteomes" id="UP000805418">
    <property type="component" value="Unplaced"/>
</dbReference>
<dbReference type="GO" id="GO:0005576">
    <property type="term" value="C:extracellular region"/>
    <property type="evidence" value="ECO:0007669"/>
    <property type="project" value="UniProtKB-SubCell"/>
</dbReference>
<dbReference type="GO" id="GO:0005739">
    <property type="term" value="C:mitochondrion"/>
    <property type="evidence" value="ECO:0000318"/>
    <property type="project" value="GO_Central"/>
</dbReference>
<dbReference type="GO" id="GO:0046872">
    <property type="term" value="F:metal ion binding"/>
    <property type="evidence" value="ECO:0007669"/>
    <property type="project" value="UniProtKB-KW"/>
</dbReference>
<dbReference type="GO" id="GO:0052856">
    <property type="term" value="F:NAD(P)HX epimerase activity"/>
    <property type="evidence" value="ECO:0000318"/>
    <property type="project" value="GO_Central"/>
</dbReference>
<dbReference type="GO" id="GO:0000166">
    <property type="term" value="F:nucleotide binding"/>
    <property type="evidence" value="ECO:0007669"/>
    <property type="project" value="UniProtKB-KW"/>
</dbReference>
<dbReference type="GO" id="GO:0006869">
    <property type="term" value="P:lipid transport"/>
    <property type="evidence" value="ECO:0007669"/>
    <property type="project" value="UniProtKB-KW"/>
</dbReference>
<dbReference type="GO" id="GO:0031580">
    <property type="term" value="P:membrane raft distribution"/>
    <property type="evidence" value="ECO:0000250"/>
    <property type="project" value="UniProtKB"/>
</dbReference>
<dbReference type="GO" id="GO:0016525">
    <property type="term" value="P:negative regulation of angiogenesis"/>
    <property type="evidence" value="ECO:0000250"/>
    <property type="project" value="UniProtKB"/>
</dbReference>
<dbReference type="GO" id="GO:0046496">
    <property type="term" value="P:nicotinamide nucleotide metabolic process"/>
    <property type="evidence" value="ECO:0000250"/>
    <property type="project" value="UniProtKB"/>
</dbReference>
<dbReference type="GO" id="GO:0010874">
    <property type="term" value="P:regulation of cholesterol efflux"/>
    <property type="evidence" value="ECO:0000250"/>
    <property type="project" value="UniProtKB"/>
</dbReference>
<dbReference type="GO" id="GO:0002040">
    <property type="term" value="P:sprouting angiogenesis"/>
    <property type="evidence" value="ECO:0000250"/>
    <property type="project" value="UniProtKB"/>
</dbReference>
<dbReference type="FunFam" id="3.40.50.10260:FF:000002">
    <property type="entry name" value="NAD(P)H-hydrate epimerase"/>
    <property type="match status" value="1"/>
</dbReference>
<dbReference type="Gene3D" id="3.40.50.10260">
    <property type="entry name" value="YjeF N-terminal domain"/>
    <property type="match status" value="1"/>
</dbReference>
<dbReference type="HAMAP" id="MF_01966">
    <property type="entry name" value="NADHX_epimerase"/>
    <property type="match status" value="1"/>
</dbReference>
<dbReference type="InterPro" id="IPR004443">
    <property type="entry name" value="YjeF_N_dom"/>
</dbReference>
<dbReference type="InterPro" id="IPR036652">
    <property type="entry name" value="YjeF_N_dom_sf"/>
</dbReference>
<dbReference type="InterPro" id="IPR032976">
    <property type="entry name" value="YJEFN_prot_NAXE-like"/>
</dbReference>
<dbReference type="NCBIfam" id="TIGR00197">
    <property type="entry name" value="yjeF_nterm"/>
    <property type="match status" value="1"/>
</dbReference>
<dbReference type="PANTHER" id="PTHR13232">
    <property type="entry name" value="NAD(P)H-HYDRATE EPIMERASE"/>
    <property type="match status" value="1"/>
</dbReference>
<dbReference type="PANTHER" id="PTHR13232:SF11">
    <property type="entry name" value="NAD(P)H-HYDRATE EPIMERASE"/>
    <property type="match status" value="1"/>
</dbReference>
<dbReference type="Pfam" id="PF03853">
    <property type="entry name" value="YjeF_N"/>
    <property type="match status" value="1"/>
</dbReference>
<dbReference type="SUPFAM" id="SSF64153">
    <property type="entry name" value="YjeF N-terminal domain-like"/>
    <property type="match status" value="1"/>
</dbReference>
<dbReference type="PROSITE" id="PS51385">
    <property type="entry name" value="YJEF_N"/>
    <property type="match status" value="1"/>
</dbReference>
<reference key="1">
    <citation type="journal article" date="2005" name="Nature">
        <title>Genome sequence, comparative analysis and haplotype structure of the domestic dog.</title>
        <authorList>
            <person name="Lindblad-Toh K."/>
            <person name="Wade C.M."/>
            <person name="Mikkelsen T.S."/>
            <person name="Karlsson E.K."/>
            <person name="Jaffe D.B."/>
            <person name="Kamal M."/>
            <person name="Clamp M."/>
            <person name="Chang J.L."/>
            <person name="Kulbokas E.J. III"/>
            <person name="Zody M.C."/>
            <person name="Mauceli E."/>
            <person name="Xie X."/>
            <person name="Breen M."/>
            <person name="Wayne R.K."/>
            <person name="Ostrander E.A."/>
            <person name="Ponting C.P."/>
            <person name="Galibert F."/>
            <person name="Smith D.R."/>
            <person name="deJong P.J."/>
            <person name="Kirkness E.F."/>
            <person name="Alvarez P."/>
            <person name="Biagi T."/>
            <person name="Brockman W."/>
            <person name="Butler J."/>
            <person name="Chin C.-W."/>
            <person name="Cook A."/>
            <person name="Cuff J."/>
            <person name="Daly M.J."/>
            <person name="DeCaprio D."/>
            <person name="Gnerre S."/>
            <person name="Grabherr M."/>
            <person name="Kellis M."/>
            <person name="Kleber M."/>
            <person name="Bardeleben C."/>
            <person name="Goodstadt L."/>
            <person name="Heger A."/>
            <person name="Hitte C."/>
            <person name="Kim L."/>
            <person name="Koepfli K.-P."/>
            <person name="Parker H.G."/>
            <person name="Pollinger J.P."/>
            <person name="Searle S.M.J."/>
            <person name="Sutter N.B."/>
            <person name="Thomas R."/>
            <person name="Webber C."/>
            <person name="Baldwin J."/>
            <person name="Abebe A."/>
            <person name="Abouelleil A."/>
            <person name="Aftuck L."/>
            <person name="Ait-Zahra M."/>
            <person name="Aldredge T."/>
            <person name="Allen N."/>
            <person name="An P."/>
            <person name="Anderson S."/>
            <person name="Antoine C."/>
            <person name="Arachchi H."/>
            <person name="Aslam A."/>
            <person name="Ayotte L."/>
            <person name="Bachantsang P."/>
            <person name="Barry A."/>
            <person name="Bayul T."/>
            <person name="Benamara M."/>
            <person name="Berlin A."/>
            <person name="Bessette D."/>
            <person name="Blitshteyn B."/>
            <person name="Bloom T."/>
            <person name="Blye J."/>
            <person name="Boguslavskiy L."/>
            <person name="Bonnet C."/>
            <person name="Boukhgalter B."/>
            <person name="Brown A."/>
            <person name="Cahill P."/>
            <person name="Calixte N."/>
            <person name="Camarata J."/>
            <person name="Cheshatsang Y."/>
            <person name="Chu J."/>
            <person name="Citroen M."/>
            <person name="Collymore A."/>
            <person name="Cooke P."/>
            <person name="Dawoe T."/>
            <person name="Daza R."/>
            <person name="Decktor K."/>
            <person name="DeGray S."/>
            <person name="Dhargay N."/>
            <person name="Dooley K."/>
            <person name="Dooley K."/>
            <person name="Dorje P."/>
            <person name="Dorjee K."/>
            <person name="Dorris L."/>
            <person name="Duffey N."/>
            <person name="Dupes A."/>
            <person name="Egbiremolen O."/>
            <person name="Elong R."/>
            <person name="Falk J."/>
            <person name="Farina A."/>
            <person name="Faro S."/>
            <person name="Ferguson D."/>
            <person name="Ferreira P."/>
            <person name="Fisher S."/>
            <person name="FitzGerald M."/>
            <person name="Foley K."/>
            <person name="Foley C."/>
            <person name="Franke A."/>
            <person name="Friedrich D."/>
            <person name="Gage D."/>
            <person name="Garber M."/>
            <person name="Gearin G."/>
            <person name="Giannoukos G."/>
            <person name="Goode T."/>
            <person name="Goyette A."/>
            <person name="Graham J."/>
            <person name="Grandbois E."/>
            <person name="Gyaltsen K."/>
            <person name="Hafez N."/>
            <person name="Hagopian D."/>
            <person name="Hagos B."/>
            <person name="Hall J."/>
            <person name="Healy C."/>
            <person name="Hegarty R."/>
            <person name="Honan T."/>
            <person name="Horn A."/>
            <person name="Houde N."/>
            <person name="Hughes L."/>
            <person name="Hunnicutt L."/>
            <person name="Husby M."/>
            <person name="Jester B."/>
            <person name="Jones C."/>
            <person name="Kamat A."/>
            <person name="Kanga B."/>
            <person name="Kells C."/>
            <person name="Khazanovich D."/>
            <person name="Kieu A.C."/>
            <person name="Kisner P."/>
            <person name="Kumar M."/>
            <person name="Lance K."/>
            <person name="Landers T."/>
            <person name="Lara M."/>
            <person name="Lee W."/>
            <person name="Leger J.-P."/>
            <person name="Lennon N."/>
            <person name="Leuper L."/>
            <person name="LeVine S."/>
            <person name="Liu J."/>
            <person name="Liu X."/>
            <person name="Lokyitsang Y."/>
            <person name="Lokyitsang T."/>
            <person name="Lui A."/>
            <person name="Macdonald J."/>
            <person name="Major J."/>
            <person name="Marabella R."/>
            <person name="Maru K."/>
            <person name="Matthews C."/>
            <person name="McDonough S."/>
            <person name="Mehta T."/>
            <person name="Meldrim J."/>
            <person name="Melnikov A."/>
            <person name="Meneus L."/>
            <person name="Mihalev A."/>
            <person name="Mihova T."/>
            <person name="Miller K."/>
            <person name="Mittelman R."/>
            <person name="Mlenga V."/>
            <person name="Mulrain L."/>
            <person name="Munson G."/>
            <person name="Navidi A."/>
            <person name="Naylor J."/>
            <person name="Nguyen T."/>
            <person name="Nguyen N."/>
            <person name="Nguyen C."/>
            <person name="Nguyen T."/>
            <person name="Nicol R."/>
            <person name="Norbu N."/>
            <person name="Norbu C."/>
            <person name="Novod N."/>
            <person name="Nyima T."/>
            <person name="Olandt P."/>
            <person name="O'Neill B."/>
            <person name="O'Neill K."/>
            <person name="Osman S."/>
            <person name="Oyono L."/>
            <person name="Patti C."/>
            <person name="Perrin D."/>
            <person name="Phunkhang P."/>
            <person name="Pierre F."/>
            <person name="Priest M."/>
            <person name="Rachupka A."/>
            <person name="Raghuraman S."/>
            <person name="Rameau R."/>
            <person name="Ray V."/>
            <person name="Raymond C."/>
            <person name="Rege F."/>
            <person name="Rise C."/>
            <person name="Rogers J."/>
            <person name="Rogov P."/>
            <person name="Sahalie J."/>
            <person name="Settipalli S."/>
            <person name="Sharpe T."/>
            <person name="Shea T."/>
            <person name="Sheehan M."/>
            <person name="Sherpa N."/>
            <person name="Shi J."/>
            <person name="Shih D."/>
            <person name="Sloan J."/>
            <person name="Smith C."/>
            <person name="Sparrow T."/>
            <person name="Stalker J."/>
            <person name="Stange-Thomann N."/>
            <person name="Stavropoulos S."/>
            <person name="Stone C."/>
            <person name="Stone S."/>
            <person name="Sykes S."/>
            <person name="Tchuinga P."/>
            <person name="Tenzing P."/>
            <person name="Tesfaye S."/>
            <person name="Thoulutsang D."/>
            <person name="Thoulutsang Y."/>
            <person name="Topham K."/>
            <person name="Topping I."/>
            <person name="Tsamla T."/>
            <person name="Vassiliev H."/>
            <person name="Venkataraman V."/>
            <person name="Vo A."/>
            <person name="Wangchuk T."/>
            <person name="Wangdi T."/>
            <person name="Weiand M."/>
            <person name="Wilkinson J."/>
            <person name="Wilson A."/>
            <person name="Yadav S."/>
            <person name="Yang S."/>
            <person name="Yang X."/>
            <person name="Young G."/>
            <person name="Yu Q."/>
            <person name="Zainoun J."/>
            <person name="Zembek L."/>
            <person name="Zimmer A."/>
            <person name="Lander E.S."/>
        </authorList>
    </citation>
    <scope>NUCLEOTIDE SEQUENCE [LARGE SCALE GENOMIC DNA]</scope>
    <source>
        <strain>Boxer</strain>
    </source>
</reference>
<name>NNRE_CANLF</name>
<organism>
    <name type="scientific">Canis lupus familiaris</name>
    <name type="common">Dog</name>
    <name type="synonym">Canis familiaris</name>
    <dbReference type="NCBI Taxonomy" id="9615"/>
    <lineage>
        <taxon>Eukaryota</taxon>
        <taxon>Metazoa</taxon>
        <taxon>Chordata</taxon>
        <taxon>Craniata</taxon>
        <taxon>Vertebrata</taxon>
        <taxon>Euteleostomi</taxon>
        <taxon>Mammalia</taxon>
        <taxon>Eutheria</taxon>
        <taxon>Laurasiatheria</taxon>
        <taxon>Carnivora</taxon>
        <taxon>Caniformia</taxon>
        <taxon>Canidae</taxon>
        <taxon>Canis</taxon>
    </lineage>
</organism>
<gene>
    <name evidence="2" type="primary">NAXE</name>
    <name evidence="3" type="synonym">AIBP</name>
    <name evidence="3" type="synonym">APOA1BP</name>
</gene>
<keyword id="KW-0413">Isomerase</keyword>
<keyword id="KW-0445">Lipid transport</keyword>
<keyword id="KW-0479">Metal-binding</keyword>
<keyword id="KW-0496">Mitochondrion</keyword>
<keyword id="KW-0520">NAD</keyword>
<keyword id="KW-0521">NADP</keyword>
<keyword id="KW-0547">Nucleotide-binding</keyword>
<keyword id="KW-0630">Potassium</keyword>
<keyword id="KW-1185">Reference proteome</keyword>
<keyword id="KW-0964">Secreted</keyword>
<keyword id="KW-0809">Transit peptide</keyword>
<keyword id="KW-0813">Transport</keyword>